<comment type="function">
    <text evidence="1">Bifunctional enzyme with both catalase and broad-spectrum peroxidase activity.</text>
</comment>
<comment type="catalytic activity">
    <reaction evidence="1">
        <text>H2O2 + AH2 = A + 2 H2O</text>
        <dbReference type="Rhea" id="RHEA:30275"/>
        <dbReference type="ChEBI" id="CHEBI:13193"/>
        <dbReference type="ChEBI" id="CHEBI:15377"/>
        <dbReference type="ChEBI" id="CHEBI:16240"/>
        <dbReference type="ChEBI" id="CHEBI:17499"/>
        <dbReference type="EC" id="1.11.1.21"/>
    </reaction>
</comment>
<comment type="catalytic activity">
    <reaction evidence="1">
        <text>2 H2O2 = O2 + 2 H2O</text>
        <dbReference type="Rhea" id="RHEA:20309"/>
        <dbReference type="ChEBI" id="CHEBI:15377"/>
        <dbReference type="ChEBI" id="CHEBI:15379"/>
        <dbReference type="ChEBI" id="CHEBI:16240"/>
        <dbReference type="EC" id="1.11.1.21"/>
    </reaction>
</comment>
<comment type="cofactor">
    <cofactor evidence="1">
        <name>heme b</name>
        <dbReference type="ChEBI" id="CHEBI:60344"/>
    </cofactor>
    <text evidence="1">Binds 1 heme b (iron(II)-protoporphyrin IX) group per dimer.</text>
</comment>
<comment type="subunit">
    <text evidence="1">Homodimer or homotetramer.</text>
</comment>
<comment type="PTM">
    <text evidence="1">Formation of the three residue Trp-Tyr-Met cross-link is important for the catalase, but not the peroxidase activity of the enzyme.</text>
</comment>
<comment type="similarity">
    <text evidence="1">Belongs to the peroxidase family. Peroxidase/catalase subfamily.</text>
</comment>
<accession>B8GPM6</accession>
<dbReference type="EC" id="1.11.1.21" evidence="1"/>
<dbReference type="EMBL" id="CP001339">
    <property type="protein sequence ID" value="ACL72193.1"/>
    <property type="molecule type" value="Genomic_DNA"/>
</dbReference>
<dbReference type="RefSeq" id="WP_012637677.1">
    <property type="nucleotide sequence ID" value="NC_011901.1"/>
</dbReference>
<dbReference type="SMR" id="B8GPM6"/>
<dbReference type="STRING" id="396588.Tgr7_1107"/>
<dbReference type="KEGG" id="tgr:Tgr7_1107"/>
<dbReference type="eggNOG" id="COG0376">
    <property type="taxonomic scope" value="Bacteria"/>
</dbReference>
<dbReference type="HOGENOM" id="CLU_025424_2_0_6"/>
<dbReference type="OrthoDB" id="9759743at2"/>
<dbReference type="Proteomes" id="UP000002383">
    <property type="component" value="Chromosome"/>
</dbReference>
<dbReference type="GO" id="GO:0005829">
    <property type="term" value="C:cytosol"/>
    <property type="evidence" value="ECO:0007669"/>
    <property type="project" value="TreeGrafter"/>
</dbReference>
<dbReference type="GO" id="GO:0004096">
    <property type="term" value="F:catalase activity"/>
    <property type="evidence" value="ECO:0007669"/>
    <property type="project" value="UniProtKB-UniRule"/>
</dbReference>
<dbReference type="GO" id="GO:0020037">
    <property type="term" value="F:heme binding"/>
    <property type="evidence" value="ECO:0007669"/>
    <property type="project" value="InterPro"/>
</dbReference>
<dbReference type="GO" id="GO:0046872">
    <property type="term" value="F:metal ion binding"/>
    <property type="evidence" value="ECO:0007669"/>
    <property type="project" value="UniProtKB-KW"/>
</dbReference>
<dbReference type="GO" id="GO:0070301">
    <property type="term" value="P:cellular response to hydrogen peroxide"/>
    <property type="evidence" value="ECO:0007669"/>
    <property type="project" value="TreeGrafter"/>
</dbReference>
<dbReference type="GO" id="GO:0042744">
    <property type="term" value="P:hydrogen peroxide catabolic process"/>
    <property type="evidence" value="ECO:0007669"/>
    <property type="project" value="UniProtKB-KW"/>
</dbReference>
<dbReference type="CDD" id="cd00649">
    <property type="entry name" value="catalase_peroxidase_1"/>
    <property type="match status" value="1"/>
</dbReference>
<dbReference type="CDD" id="cd08200">
    <property type="entry name" value="catalase_peroxidase_2"/>
    <property type="match status" value="1"/>
</dbReference>
<dbReference type="FunFam" id="1.10.420.10:FF:000004">
    <property type="entry name" value="Catalase-peroxidase"/>
    <property type="match status" value="1"/>
</dbReference>
<dbReference type="FunFam" id="1.10.520.10:FF:000002">
    <property type="entry name" value="Catalase-peroxidase"/>
    <property type="match status" value="1"/>
</dbReference>
<dbReference type="Gene3D" id="1.10.520.10">
    <property type="match status" value="2"/>
</dbReference>
<dbReference type="Gene3D" id="1.10.420.10">
    <property type="entry name" value="Peroxidase, domain 2"/>
    <property type="match status" value="2"/>
</dbReference>
<dbReference type="HAMAP" id="MF_01961">
    <property type="entry name" value="Catal_peroxid"/>
    <property type="match status" value="1"/>
</dbReference>
<dbReference type="InterPro" id="IPR000763">
    <property type="entry name" value="Catalase_peroxidase"/>
</dbReference>
<dbReference type="InterPro" id="IPR002016">
    <property type="entry name" value="Haem_peroxidase"/>
</dbReference>
<dbReference type="InterPro" id="IPR010255">
    <property type="entry name" value="Haem_peroxidase_sf"/>
</dbReference>
<dbReference type="InterPro" id="IPR019794">
    <property type="entry name" value="Peroxidases_AS"/>
</dbReference>
<dbReference type="NCBIfam" id="TIGR00198">
    <property type="entry name" value="cat_per_HPI"/>
    <property type="match status" value="1"/>
</dbReference>
<dbReference type="NCBIfam" id="NF011635">
    <property type="entry name" value="PRK15061.1"/>
    <property type="match status" value="1"/>
</dbReference>
<dbReference type="PANTHER" id="PTHR30555:SF6">
    <property type="entry name" value="CATALASE-PEROXIDASE"/>
    <property type="match status" value="1"/>
</dbReference>
<dbReference type="PANTHER" id="PTHR30555">
    <property type="entry name" value="HYDROPEROXIDASE I, BIFUNCTIONAL CATALASE-PEROXIDASE"/>
    <property type="match status" value="1"/>
</dbReference>
<dbReference type="Pfam" id="PF00141">
    <property type="entry name" value="peroxidase"/>
    <property type="match status" value="2"/>
</dbReference>
<dbReference type="PRINTS" id="PR00460">
    <property type="entry name" value="BPEROXIDASE"/>
</dbReference>
<dbReference type="PRINTS" id="PR00458">
    <property type="entry name" value="PEROXIDASE"/>
</dbReference>
<dbReference type="SUPFAM" id="SSF48113">
    <property type="entry name" value="Heme-dependent peroxidases"/>
    <property type="match status" value="2"/>
</dbReference>
<dbReference type="PROSITE" id="PS00436">
    <property type="entry name" value="PEROXIDASE_2"/>
    <property type="match status" value="1"/>
</dbReference>
<dbReference type="PROSITE" id="PS50873">
    <property type="entry name" value="PEROXIDASE_4"/>
    <property type="match status" value="1"/>
</dbReference>
<name>KATG_THISH</name>
<sequence length="723" mass="79965">MSAQNIQSAGKCPVMHGANTEVGTSNMDWWPKALNLDILHQHDTKTNPMDEEFSYREAVKTLDFAAVKRDVEALMTDSQAWWPADWGHYGGLMIRMAWHAAGSYRAADGRGGANTGNQRFAPLNSWPDNANLDKARRLLWPIKKKYGNRLSWADLIVLAGNVAYESMGLKTFGFGFGREDIWHPEKDTYWGAEKEWLAPSDERYGSVDDPSTMENPLAAVQMGLIYVNPEGVNGKPDPLKTAAQVRETFARMGMNDEETVALTAGGHTVGKTHGNGRAENLGPSPEGADISEQGLGWMNHKTRGIGRDSVTSGIEGAWTTHPTKWDNGYFDMLFGHEWELKKSPAGAWQWEPVDIREEDMPVDVEDPSIRCKPIMTDADMAMREDPIYRKISERFHKDPALLTETFARAWFKLIHRDMGPKARYIGPEVPAEDLIWQDPVPAGKTGYDVDAVKAKIAASGLSIAEMVATAWDSARTFRQSDFRGGANGARIRLAPQKDWEGNEPARLQKVLAVLEPIAADSGASVADVIVLAGNVGIEQAAKAAGVNVTVPFAPGRGDATQEMTDADGFAVLEPIHDGYRNWVKKDYVVSAEELMLDRTQLMGLTAAEMTVLVGGMRVLGTNHGGAKHGVFTDKVGTLSQDFFVNLTDMNNVWKPAGAHYEIRDRKTDAVKWTATRVDLVFGSNSILRAYAEVYAQDDNQEKFVRDFVNAWTKVMNADRFDLK</sequence>
<reference key="1">
    <citation type="journal article" date="2011" name="Stand. Genomic Sci.">
        <title>Complete genome sequence of 'Thioalkalivibrio sulfidophilus' HL-EbGr7.</title>
        <authorList>
            <person name="Muyzer G."/>
            <person name="Sorokin D.Y."/>
            <person name="Mavromatis K."/>
            <person name="Lapidus A."/>
            <person name="Clum A."/>
            <person name="Ivanova N."/>
            <person name="Pati A."/>
            <person name="d'Haeseleer P."/>
            <person name="Woyke T."/>
            <person name="Kyrpides N.C."/>
        </authorList>
    </citation>
    <scope>NUCLEOTIDE SEQUENCE [LARGE SCALE GENOMIC DNA]</scope>
    <source>
        <strain>HL-EbGR7</strain>
    </source>
</reference>
<gene>
    <name evidence="1" type="primary">katG</name>
    <name type="ordered locus">Tgr7_1107</name>
</gene>
<organism>
    <name type="scientific">Thioalkalivibrio sulfidiphilus (strain HL-EbGR7)</name>
    <dbReference type="NCBI Taxonomy" id="396588"/>
    <lineage>
        <taxon>Bacteria</taxon>
        <taxon>Pseudomonadati</taxon>
        <taxon>Pseudomonadota</taxon>
        <taxon>Gammaproteobacteria</taxon>
        <taxon>Chromatiales</taxon>
        <taxon>Ectothiorhodospiraceae</taxon>
        <taxon>Thioalkalivibrio</taxon>
    </lineage>
</organism>
<protein>
    <recommendedName>
        <fullName evidence="1">Catalase-peroxidase</fullName>
        <shortName evidence="1">CP</shortName>
        <ecNumber evidence="1">1.11.1.21</ecNumber>
    </recommendedName>
    <alternativeName>
        <fullName evidence="1">Peroxidase/catalase</fullName>
    </alternativeName>
</protein>
<feature type="chain" id="PRO_1000189074" description="Catalase-peroxidase">
    <location>
        <begin position="1"/>
        <end position="723"/>
    </location>
</feature>
<feature type="region of interest" description="Disordered" evidence="2">
    <location>
        <begin position="267"/>
        <end position="286"/>
    </location>
</feature>
<feature type="active site" description="Proton acceptor" evidence="1">
    <location>
        <position position="99"/>
    </location>
</feature>
<feature type="binding site" description="axial binding residue" evidence="1">
    <location>
        <position position="267"/>
    </location>
    <ligand>
        <name>heme b</name>
        <dbReference type="ChEBI" id="CHEBI:60344"/>
    </ligand>
    <ligandPart>
        <name>Fe</name>
        <dbReference type="ChEBI" id="CHEBI:18248"/>
    </ligandPart>
</feature>
<feature type="site" description="Transition state stabilizer" evidence="1">
    <location>
        <position position="95"/>
    </location>
</feature>
<feature type="cross-link" description="Tryptophyl-tyrosyl-methioninium (Trp-Tyr) (with M-252)" evidence="1">
    <location>
        <begin position="98"/>
        <end position="226"/>
    </location>
</feature>
<feature type="cross-link" description="Tryptophyl-tyrosyl-methioninium (Tyr-Met) (with W-98)" evidence="1">
    <location>
        <begin position="226"/>
        <end position="252"/>
    </location>
</feature>
<evidence type="ECO:0000255" key="1">
    <source>
        <dbReference type="HAMAP-Rule" id="MF_01961"/>
    </source>
</evidence>
<evidence type="ECO:0000256" key="2">
    <source>
        <dbReference type="SAM" id="MobiDB-lite"/>
    </source>
</evidence>
<keyword id="KW-0349">Heme</keyword>
<keyword id="KW-0376">Hydrogen peroxide</keyword>
<keyword id="KW-0408">Iron</keyword>
<keyword id="KW-0479">Metal-binding</keyword>
<keyword id="KW-0560">Oxidoreductase</keyword>
<keyword id="KW-0575">Peroxidase</keyword>
<keyword id="KW-1185">Reference proteome</keyword>
<proteinExistence type="inferred from homology"/>